<comment type="function">
    <text evidence="1">Involved in protein export. Acts as a chaperone by maintaining the newly synthesized protein in an open conformation. Functions as a peptidyl-prolyl cis-trans isomerase.</text>
</comment>
<comment type="catalytic activity">
    <reaction evidence="1">
        <text>[protein]-peptidylproline (omega=180) = [protein]-peptidylproline (omega=0)</text>
        <dbReference type="Rhea" id="RHEA:16237"/>
        <dbReference type="Rhea" id="RHEA-COMP:10747"/>
        <dbReference type="Rhea" id="RHEA-COMP:10748"/>
        <dbReference type="ChEBI" id="CHEBI:83833"/>
        <dbReference type="ChEBI" id="CHEBI:83834"/>
        <dbReference type="EC" id="5.2.1.8"/>
    </reaction>
</comment>
<comment type="subcellular location">
    <subcellularLocation>
        <location>Cytoplasm</location>
    </subcellularLocation>
    <text evidence="1">About half TF is bound to the ribosome near the polypeptide exit tunnel while the other half is free in the cytoplasm.</text>
</comment>
<comment type="domain">
    <text evidence="1">Consists of 3 domains; the N-terminus binds the ribosome, the middle domain has PPIase activity, while the C-terminus has intrinsic chaperone activity on its own.</text>
</comment>
<comment type="similarity">
    <text evidence="1">Belongs to the FKBP-type PPIase family. Tig subfamily.</text>
</comment>
<protein>
    <recommendedName>
        <fullName evidence="1">Trigger factor</fullName>
        <shortName evidence="1">TF</shortName>
        <ecNumber evidence="1">5.2.1.8</ecNumber>
    </recommendedName>
    <alternativeName>
        <fullName evidence="1">PPIase</fullName>
    </alternativeName>
</protein>
<evidence type="ECO:0000255" key="1">
    <source>
        <dbReference type="HAMAP-Rule" id="MF_00303"/>
    </source>
</evidence>
<organism>
    <name type="scientific">Nitrosococcus oceani (strain ATCC 19707 / BCRC 17464 / JCM 30415 / NCIMB 11848 / C-107)</name>
    <dbReference type="NCBI Taxonomy" id="323261"/>
    <lineage>
        <taxon>Bacteria</taxon>
        <taxon>Pseudomonadati</taxon>
        <taxon>Pseudomonadota</taxon>
        <taxon>Gammaproteobacteria</taxon>
        <taxon>Chromatiales</taxon>
        <taxon>Chromatiaceae</taxon>
        <taxon>Nitrosococcus</taxon>
    </lineage>
</organism>
<name>TIG_NITOC</name>
<proteinExistence type="inferred from homology"/>
<accession>Q3JAJ7</accession>
<dbReference type="EC" id="5.2.1.8" evidence="1"/>
<dbReference type="EMBL" id="CP000127">
    <property type="protein sequence ID" value="ABA58149.1"/>
    <property type="molecule type" value="Genomic_DNA"/>
</dbReference>
<dbReference type="RefSeq" id="WP_002809275.1">
    <property type="nucleotide sequence ID" value="NC_007484.1"/>
</dbReference>
<dbReference type="SMR" id="Q3JAJ7"/>
<dbReference type="FunCoup" id="Q3JAJ7">
    <property type="interactions" value="653"/>
</dbReference>
<dbReference type="STRING" id="323261.Noc_1677"/>
<dbReference type="KEGG" id="noc:Noc_1677"/>
<dbReference type="eggNOG" id="COG0544">
    <property type="taxonomic scope" value="Bacteria"/>
</dbReference>
<dbReference type="HOGENOM" id="CLU_033058_2_0_6"/>
<dbReference type="InParanoid" id="Q3JAJ7"/>
<dbReference type="Proteomes" id="UP000006838">
    <property type="component" value="Chromosome"/>
</dbReference>
<dbReference type="GO" id="GO:0005737">
    <property type="term" value="C:cytoplasm"/>
    <property type="evidence" value="ECO:0007669"/>
    <property type="project" value="UniProtKB-SubCell"/>
</dbReference>
<dbReference type="GO" id="GO:0003755">
    <property type="term" value="F:peptidyl-prolyl cis-trans isomerase activity"/>
    <property type="evidence" value="ECO:0007669"/>
    <property type="project" value="UniProtKB-UniRule"/>
</dbReference>
<dbReference type="GO" id="GO:0044183">
    <property type="term" value="F:protein folding chaperone"/>
    <property type="evidence" value="ECO:0007669"/>
    <property type="project" value="TreeGrafter"/>
</dbReference>
<dbReference type="GO" id="GO:0043022">
    <property type="term" value="F:ribosome binding"/>
    <property type="evidence" value="ECO:0007669"/>
    <property type="project" value="TreeGrafter"/>
</dbReference>
<dbReference type="GO" id="GO:0051083">
    <property type="term" value="P:'de novo' cotranslational protein folding"/>
    <property type="evidence" value="ECO:0007669"/>
    <property type="project" value="TreeGrafter"/>
</dbReference>
<dbReference type="GO" id="GO:0051301">
    <property type="term" value="P:cell division"/>
    <property type="evidence" value="ECO:0007669"/>
    <property type="project" value="UniProtKB-KW"/>
</dbReference>
<dbReference type="GO" id="GO:0061077">
    <property type="term" value="P:chaperone-mediated protein folding"/>
    <property type="evidence" value="ECO:0007669"/>
    <property type="project" value="TreeGrafter"/>
</dbReference>
<dbReference type="GO" id="GO:0015031">
    <property type="term" value="P:protein transport"/>
    <property type="evidence" value="ECO:0007669"/>
    <property type="project" value="UniProtKB-UniRule"/>
</dbReference>
<dbReference type="GO" id="GO:0043335">
    <property type="term" value="P:protein unfolding"/>
    <property type="evidence" value="ECO:0007669"/>
    <property type="project" value="TreeGrafter"/>
</dbReference>
<dbReference type="FunFam" id="3.10.50.40:FF:000001">
    <property type="entry name" value="Trigger factor"/>
    <property type="match status" value="1"/>
</dbReference>
<dbReference type="Gene3D" id="3.10.50.40">
    <property type="match status" value="1"/>
</dbReference>
<dbReference type="Gene3D" id="3.30.70.1050">
    <property type="entry name" value="Trigger factor ribosome-binding domain"/>
    <property type="match status" value="1"/>
</dbReference>
<dbReference type="Gene3D" id="1.10.3120.10">
    <property type="entry name" value="Trigger factor, C-terminal domain"/>
    <property type="match status" value="1"/>
</dbReference>
<dbReference type="HAMAP" id="MF_00303">
    <property type="entry name" value="Trigger_factor_Tig"/>
    <property type="match status" value="1"/>
</dbReference>
<dbReference type="InterPro" id="IPR046357">
    <property type="entry name" value="PPIase_dom_sf"/>
</dbReference>
<dbReference type="InterPro" id="IPR001179">
    <property type="entry name" value="PPIase_FKBP_dom"/>
</dbReference>
<dbReference type="InterPro" id="IPR005215">
    <property type="entry name" value="Trig_fac"/>
</dbReference>
<dbReference type="InterPro" id="IPR008880">
    <property type="entry name" value="Trigger_fac_C"/>
</dbReference>
<dbReference type="InterPro" id="IPR037041">
    <property type="entry name" value="Trigger_fac_C_sf"/>
</dbReference>
<dbReference type="InterPro" id="IPR008881">
    <property type="entry name" value="Trigger_fac_ribosome-bd_bac"/>
</dbReference>
<dbReference type="InterPro" id="IPR036611">
    <property type="entry name" value="Trigger_fac_ribosome-bd_sf"/>
</dbReference>
<dbReference type="InterPro" id="IPR027304">
    <property type="entry name" value="Trigger_fact/SurA_dom_sf"/>
</dbReference>
<dbReference type="NCBIfam" id="TIGR00115">
    <property type="entry name" value="tig"/>
    <property type="match status" value="1"/>
</dbReference>
<dbReference type="PANTHER" id="PTHR30560">
    <property type="entry name" value="TRIGGER FACTOR CHAPERONE AND PEPTIDYL-PROLYL CIS/TRANS ISOMERASE"/>
    <property type="match status" value="1"/>
</dbReference>
<dbReference type="PANTHER" id="PTHR30560:SF3">
    <property type="entry name" value="TRIGGER FACTOR-LIKE PROTEIN TIG, CHLOROPLASTIC"/>
    <property type="match status" value="1"/>
</dbReference>
<dbReference type="Pfam" id="PF00254">
    <property type="entry name" value="FKBP_C"/>
    <property type="match status" value="1"/>
</dbReference>
<dbReference type="Pfam" id="PF05698">
    <property type="entry name" value="Trigger_C"/>
    <property type="match status" value="1"/>
</dbReference>
<dbReference type="Pfam" id="PF05697">
    <property type="entry name" value="Trigger_N"/>
    <property type="match status" value="1"/>
</dbReference>
<dbReference type="PIRSF" id="PIRSF003095">
    <property type="entry name" value="Trigger_factor"/>
    <property type="match status" value="1"/>
</dbReference>
<dbReference type="SUPFAM" id="SSF54534">
    <property type="entry name" value="FKBP-like"/>
    <property type="match status" value="1"/>
</dbReference>
<dbReference type="SUPFAM" id="SSF109998">
    <property type="entry name" value="Triger factor/SurA peptide-binding domain-like"/>
    <property type="match status" value="1"/>
</dbReference>
<dbReference type="SUPFAM" id="SSF102735">
    <property type="entry name" value="Trigger factor ribosome-binding domain"/>
    <property type="match status" value="1"/>
</dbReference>
<dbReference type="PROSITE" id="PS50059">
    <property type="entry name" value="FKBP_PPIASE"/>
    <property type="match status" value="1"/>
</dbReference>
<gene>
    <name evidence="1" type="primary">tig</name>
    <name type="ordered locus">Noc_1677</name>
</gene>
<sequence>MQVTVEATGELERRLTITLPGSDFESKVQERLRSMVPRIKMDGFRPGKVPYKVVERRYGSAVRQEVSDEFVRDSFRDAIKQESLRPAGMPQIEPPQLEAGESFAYTVTFEVLPEIESVKLEGIKIKQPRAEVTDKDIEGVLKKLQEQHIEWEPMERPAQEADGVTITYHGSIEGKPFPGGSKENFFVILGKGTTLKEFEEHLIGVNKGQELTFEITFPEHYGNQELAGKKASFAVKVISVTAPRLPEINEDFAEKLGVKEGGVAALRQEIKASMTRNLEQAVRDRVREQIMDGLLVANPTTLPISLVKEETSILLEQAKNNLAKQGVNPQEISLDESPFVEQARRRVALRLIFSTILEKQEIKADQDKIKQRVTELAASYEDPEEFSRWIFSDRERLSEIENAVMETQIIDWVLDQVEVLDKSMSFEEVVNPQISSAKEKVQD</sequence>
<reference key="1">
    <citation type="journal article" date="2006" name="Appl. Environ. Microbiol.">
        <title>Complete genome sequence of the marine, chemolithoautotrophic, ammonia-oxidizing bacterium Nitrosococcus oceani ATCC 19707.</title>
        <authorList>
            <person name="Klotz M.G."/>
            <person name="Arp D.J."/>
            <person name="Chain P.S.G."/>
            <person name="El-Sheikh A.F."/>
            <person name="Hauser L.J."/>
            <person name="Hommes N.G."/>
            <person name="Larimer F.W."/>
            <person name="Malfatti S.A."/>
            <person name="Norton J.M."/>
            <person name="Poret-Peterson A.T."/>
            <person name="Vergez L.M."/>
            <person name="Ward B.B."/>
        </authorList>
    </citation>
    <scope>NUCLEOTIDE SEQUENCE [LARGE SCALE GENOMIC DNA]</scope>
    <source>
        <strain>ATCC 19707 / BCRC 17464 / JCM 30415 / NCIMB 11848 / C-107</strain>
    </source>
</reference>
<feature type="chain" id="PRO_0000256582" description="Trigger factor">
    <location>
        <begin position="1"/>
        <end position="443"/>
    </location>
</feature>
<feature type="domain" description="PPIase FKBP-type" evidence="1">
    <location>
        <begin position="161"/>
        <end position="246"/>
    </location>
</feature>
<keyword id="KW-0131">Cell cycle</keyword>
<keyword id="KW-0132">Cell division</keyword>
<keyword id="KW-0143">Chaperone</keyword>
<keyword id="KW-0963">Cytoplasm</keyword>
<keyword id="KW-0413">Isomerase</keyword>
<keyword id="KW-1185">Reference proteome</keyword>
<keyword id="KW-0697">Rotamase</keyword>